<keyword id="KW-0090">Biological rhythms</keyword>
<keyword id="KW-0963">Cytoplasm</keyword>
<keyword id="KW-0479">Metal-binding</keyword>
<keyword id="KW-0539">Nucleus</keyword>
<keyword id="KW-0597">Phosphoprotein</keyword>
<keyword id="KW-1185">Reference proteome</keyword>
<keyword id="KW-0677">Repeat</keyword>
<keyword id="KW-0694">RNA-binding</keyword>
<keyword id="KW-0862">Zinc</keyword>
<keyword id="KW-0863">Zinc-finger</keyword>
<feature type="chain" id="PRO_0000081758" description="RNA-binding protein lark">
    <location>
        <begin position="1"/>
        <end position="352"/>
    </location>
</feature>
<feature type="domain" description="RRM 1" evidence="2">
    <location>
        <begin position="7"/>
        <end position="77"/>
    </location>
</feature>
<feature type="domain" description="RRM 2" evidence="2">
    <location>
        <begin position="86"/>
        <end position="156"/>
    </location>
</feature>
<feature type="zinc finger region" description="CCHC-type" evidence="1">
    <location>
        <begin position="168"/>
        <end position="185"/>
    </location>
</feature>
<feature type="region of interest" description="Disordered" evidence="3">
    <location>
        <begin position="187"/>
        <end position="228"/>
    </location>
</feature>
<feature type="region of interest" description="Disordered" evidence="3">
    <location>
        <begin position="254"/>
        <end position="352"/>
    </location>
</feature>
<feature type="compositionally biased region" description="Pro residues" evidence="3">
    <location>
        <begin position="214"/>
        <end position="224"/>
    </location>
</feature>
<feature type="compositionally biased region" description="Pro residues" evidence="3">
    <location>
        <begin position="262"/>
        <end position="277"/>
    </location>
</feature>
<feature type="compositionally biased region" description="Polar residues" evidence="3">
    <location>
        <begin position="279"/>
        <end position="288"/>
    </location>
</feature>
<feature type="compositionally biased region" description="Basic and acidic residues" evidence="3">
    <location>
        <begin position="320"/>
        <end position="334"/>
    </location>
</feature>
<feature type="modified residue" description="Phosphoserine" evidence="6">
    <location>
        <position position="198"/>
    </location>
</feature>
<feature type="modified residue" description="Phosphoserine" evidence="6">
    <location>
        <position position="201"/>
    </location>
</feature>
<feature type="modified residue" description="Phosphoserine" evidence="6">
    <location>
        <position position="315"/>
    </location>
</feature>
<feature type="modified residue" description="Phosphoserine" evidence="6">
    <location>
        <position position="325"/>
    </location>
</feature>
<feature type="mutagenesis site" description="Non-functional; when associated with A-89." evidence="4">
    <original>F</original>
    <variation>A</variation>
    <location>
        <position position="10"/>
    </location>
</feature>
<feature type="mutagenesis site" description="Defects in sensory bristle formation and wing shape, and oogenesis. Non-functional; when associated with A-10." evidence="4">
    <original>F</original>
    <variation>A</variation>
    <location>
        <position position="89"/>
    </location>
</feature>
<feature type="mutagenesis site" description="Defects in sensory bristle formation and wing shape, and oogenesis; when associated with Y-173." evidence="4">
    <original>C</original>
    <variation>Y</variation>
    <location>
        <position position="170"/>
    </location>
</feature>
<feature type="mutagenesis site" description="Defects in sensory bristle formation and wing shape, and oogenesis; when associated with Y-170." evidence="4">
    <original>C</original>
    <variation>Y</variation>
    <location>
        <position position="173"/>
    </location>
</feature>
<protein>
    <recommendedName>
        <fullName>RNA-binding protein lark</fullName>
    </recommendedName>
</protein>
<evidence type="ECO:0000255" key="1">
    <source>
        <dbReference type="PROSITE-ProRule" id="PRU00047"/>
    </source>
</evidence>
<evidence type="ECO:0000255" key="2">
    <source>
        <dbReference type="PROSITE-ProRule" id="PRU00176"/>
    </source>
</evidence>
<evidence type="ECO:0000256" key="3">
    <source>
        <dbReference type="SAM" id="MobiDB-lite"/>
    </source>
</evidence>
<evidence type="ECO:0000269" key="4">
    <source>
    </source>
</evidence>
<evidence type="ECO:0000269" key="5">
    <source>
    </source>
</evidence>
<evidence type="ECO:0000269" key="6">
    <source>
    </source>
</evidence>
<evidence type="ECO:0000269" key="7">
    <source>
    </source>
</evidence>
<evidence type="ECO:0000269" key="8">
    <source>
    </source>
</evidence>
<evidence type="ECO:0000269" key="9">
    <source>
    </source>
</evidence>
<gene>
    <name type="primary">lark</name>
    <name type="ORF">CG8597</name>
</gene>
<organism>
    <name type="scientific">Drosophila melanogaster</name>
    <name type="common">Fruit fly</name>
    <dbReference type="NCBI Taxonomy" id="7227"/>
    <lineage>
        <taxon>Eukaryota</taxon>
        <taxon>Metazoa</taxon>
        <taxon>Ecdysozoa</taxon>
        <taxon>Arthropoda</taxon>
        <taxon>Hexapoda</taxon>
        <taxon>Insecta</taxon>
        <taxon>Pterygota</taxon>
        <taxon>Neoptera</taxon>
        <taxon>Endopterygota</taxon>
        <taxon>Diptera</taxon>
        <taxon>Brachycera</taxon>
        <taxon>Muscomorpha</taxon>
        <taxon>Ephydroidea</taxon>
        <taxon>Drosophilidae</taxon>
        <taxon>Drosophila</taxon>
        <taxon>Sophophora</taxon>
    </lineage>
</organism>
<sequence>MPGAGTFKLFIGNLDEKTQATELRALFEKYGTVVECDVVKNYGFVHMETEQQGRDAIQNLNGYTLNEFAIKVEAAKSRRAPNTPTTKIFVGNLTDKTRAPEVRELFQKYGTVVECDIVRNYGFVHLDCVGDVQDAIKELNGRVVDGQPLKVQVSTSRVRPKPGMGDPEQCYRCGRSGHWSKECPRLYGSAGGGREPPSPLSAGGYRDRMYGRDPYPPPPPPPPFLRDRIMDGFRDYDYYDRRFEDSRDLYERRYQTSRMRDFPPPPISRREPMPLPPTLSGSLRSCSVSRGYDTMFSRRSPPPPRSSNGMSRYGSPTPHGYEDFSRDAFDERMISSRGMRGPSPPGRRYAPY</sequence>
<accession>Q94901</accession>
<accession>A4V1L0</accession>
<comment type="function">
    <text evidence="4 5 7 8 9">Essential RNA-binding protein. May be required for circadian repression of eclosion. Also essential for nurse cell dumping during oogenesis, the process whereby the cytoplasmic contents of nurse cells are transferred to the oocyte late in it's development.</text>
</comment>
<comment type="subcellular location">
    <subcellularLocation>
        <location evidence="9">Cytoplasm</location>
    </subcellularLocation>
    <subcellularLocation>
        <location evidence="9">Nucleus</location>
    </subcellularLocation>
    <text>The precise location within neurons varies according to the type of neuron, being cytoplasmic in CCAP neurons and nuclear in the CNS.</text>
</comment>
<comment type="tissue specificity">
    <text evidence="7 9">Expressed in the CNS and in CCAP neurons of the ventral nervous system (VNS), which control insect ecdysis.</text>
</comment>
<comment type="induction">
    <text evidence="9">Oscillates in abundance during the circadian cycle at the protein level; peaks during the subjective day.</text>
</comment>
<name>LARK_DROME</name>
<proteinExistence type="evidence at protein level"/>
<dbReference type="EMBL" id="U59476">
    <property type="protein sequence ID" value="AAB07067.1"/>
    <property type="molecule type" value="mRNA"/>
</dbReference>
<dbReference type="EMBL" id="AE014296">
    <property type="protein sequence ID" value="AAF50578.1"/>
    <property type="molecule type" value="Genomic_DNA"/>
</dbReference>
<dbReference type="EMBL" id="AE014296">
    <property type="protein sequence ID" value="AAN12053.1"/>
    <property type="molecule type" value="Genomic_DNA"/>
</dbReference>
<dbReference type="EMBL" id="AE014296">
    <property type="protein sequence ID" value="AAN12054.1"/>
    <property type="molecule type" value="Genomic_DNA"/>
</dbReference>
<dbReference type="EMBL" id="AE014296">
    <property type="protein sequence ID" value="AAN12055.1"/>
    <property type="molecule type" value="Genomic_DNA"/>
</dbReference>
<dbReference type="EMBL" id="AE014296">
    <property type="protein sequence ID" value="AAN12056.1"/>
    <property type="molecule type" value="Genomic_DNA"/>
</dbReference>
<dbReference type="EMBL" id="AY061458">
    <property type="protein sequence ID" value="AAL29006.1"/>
    <property type="molecule type" value="mRNA"/>
</dbReference>
<dbReference type="RefSeq" id="NP_523957.1">
    <property type="nucleotide sequence ID" value="NM_079233.6"/>
</dbReference>
<dbReference type="RefSeq" id="NP_729237.1">
    <property type="nucleotide sequence ID" value="NM_168202.3"/>
</dbReference>
<dbReference type="RefSeq" id="NP_729238.1">
    <property type="nucleotide sequence ID" value="NM_168203.4"/>
</dbReference>
<dbReference type="RefSeq" id="NP_729239.1">
    <property type="nucleotide sequence ID" value="NM_168204.3"/>
</dbReference>
<dbReference type="RefSeq" id="NP_729240.1">
    <property type="nucleotide sequence ID" value="NM_168205.4"/>
</dbReference>
<dbReference type="SMR" id="Q94901"/>
<dbReference type="BioGRID" id="64251">
    <property type="interactions" value="40"/>
</dbReference>
<dbReference type="FunCoup" id="Q94901">
    <property type="interactions" value="1228"/>
</dbReference>
<dbReference type="IntAct" id="Q94901">
    <property type="interactions" value="3"/>
</dbReference>
<dbReference type="STRING" id="7227.FBpp0076556"/>
<dbReference type="iPTMnet" id="Q94901"/>
<dbReference type="PaxDb" id="7227-FBpp0076555"/>
<dbReference type="DNASU" id="38811"/>
<dbReference type="EnsemblMetazoa" id="FBtr0076841">
    <property type="protein sequence ID" value="FBpp0076552"/>
    <property type="gene ID" value="FBgn0011640"/>
</dbReference>
<dbReference type="EnsemblMetazoa" id="FBtr0076842">
    <property type="protein sequence ID" value="FBpp0076553"/>
    <property type="gene ID" value="FBgn0011640"/>
</dbReference>
<dbReference type="EnsemblMetazoa" id="FBtr0076843">
    <property type="protein sequence ID" value="FBpp0076554"/>
    <property type="gene ID" value="FBgn0011640"/>
</dbReference>
<dbReference type="EnsemblMetazoa" id="FBtr0076844">
    <property type="protein sequence ID" value="FBpp0076555"/>
    <property type="gene ID" value="FBgn0011640"/>
</dbReference>
<dbReference type="EnsemblMetazoa" id="FBtr0076845">
    <property type="protein sequence ID" value="FBpp0076556"/>
    <property type="gene ID" value="FBgn0011640"/>
</dbReference>
<dbReference type="GeneID" id="38811"/>
<dbReference type="KEGG" id="dme:Dmel_CG8597"/>
<dbReference type="UCSC" id="CG8597-RA">
    <property type="organism name" value="d. melanogaster"/>
</dbReference>
<dbReference type="AGR" id="FB:FBgn0011640"/>
<dbReference type="CTD" id="38811"/>
<dbReference type="FlyBase" id="FBgn0011640">
    <property type="gene designation" value="lark"/>
</dbReference>
<dbReference type="VEuPathDB" id="VectorBase:FBgn0011640"/>
<dbReference type="eggNOG" id="KOG0109">
    <property type="taxonomic scope" value="Eukaryota"/>
</dbReference>
<dbReference type="GeneTree" id="ENSGT00940000175488"/>
<dbReference type="HOGENOM" id="CLU_045263_1_0_1"/>
<dbReference type="InParanoid" id="Q94901"/>
<dbReference type="OMA" id="GYDSMFS"/>
<dbReference type="OrthoDB" id="79941at2759"/>
<dbReference type="PhylomeDB" id="Q94901"/>
<dbReference type="Reactome" id="R-DME-8941326">
    <property type="pathway name" value="RUNX2 regulates bone development"/>
</dbReference>
<dbReference type="SignaLink" id="Q94901"/>
<dbReference type="BioGRID-ORCS" id="38811">
    <property type="hits" value="1 hit in 3 CRISPR screens"/>
</dbReference>
<dbReference type="GenomeRNAi" id="38811"/>
<dbReference type="PRO" id="PR:Q94901"/>
<dbReference type="Proteomes" id="UP000000803">
    <property type="component" value="Chromosome 3L"/>
</dbReference>
<dbReference type="Bgee" id="FBgn0011640">
    <property type="expression patterns" value="Expressed in wing disc and 268 other cell types or tissues"/>
</dbReference>
<dbReference type="GO" id="GO:0071013">
    <property type="term" value="C:catalytic step 2 spliceosome"/>
    <property type="evidence" value="ECO:0007005"/>
    <property type="project" value="FlyBase"/>
</dbReference>
<dbReference type="GO" id="GO:0005737">
    <property type="term" value="C:cytoplasm"/>
    <property type="evidence" value="ECO:0000314"/>
    <property type="project" value="UniProtKB"/>
</dbReference>
<dbReference type="GO" id="GO:0016607">
    <property type="term" value="C:nuclear speck"/>
    <property type="evidence" value="ECO:0000318"/>
    <property type="project" value="GO_Central"/>
</dbReference>
<dbReference type="GO" id="GO:0005634">
    <property type="term" value="C:nucleus"/>
    <property type="evidence" value="ECO:0000314"/>
    <property type="project" value="UniProtKB"/>
</dbReference>
<dbReference type="GO" id="GO:0071011">
    <property type="term" value="C:precatalytic spliceosome"/>
    <property type="evidence" value="ECO:0007005"/>
    <property type="project" value="FlyBase"/>
</dbReference>
<dbReference type="GO" id="GO:0003729">
    <property type="term" value="F:mRNA binding"/>
    <property type="evidence" value="ECO:0000250"/>
    <property type="project" value="FlyBase"/>
</dbReference>
<dbReference type="GO" id="GO:0003723">
    <property type="term" value="F:RNA binding"/>
    <property type="evidence" value="ECO:0000314"/>
    <property type="project" value="FlyBase"/>
</dbReference>
<dbReference type="GO" id="GO:0008270">
    <property type="term" value="F:zinc ion binding"/>
    <property type="evidence" value="ECO:0007669"/>
    <property type="project" value="UniProtKB-KW"/>
</dbReference>
<dbReference type="GO" id="GO:0030036">
    <property type="term" value="P:actin cytoskeleton organization"/>
    <property type="evidence" value="ECO:0000315"/>
    <property type="project" value="UniProtKB"/>
</dbReference>
<dbReference type="GO" id="GO:0007623">
    <property type="term" value="P:circadian rhythm"/>
    <property type="evidence" value="ECO:0000315"/>
    <property type="project" value="FlyBase"/>
</dbReference>
<dbReference type="GO" id="GO:0007562">
    <property type="term" value="P:eclosion"/>
    <property type="evidence" value="ECO:0000304"/>
    <property type="project" value="FlyBase"/>
</dbReference>
<dbReference type="GO" id="GO:0008062">
    <property type="term" value="P:eclosion rhythm"/>
    <property type="evidence" value="ECO:0000315"/>
    <property type="project" value="UniProtKB"/>
</dbReference>
<dbReference type="GO" id="GO:0009792">
    <property type="term" value="P:embryo development ending in birth or egg hatching"/>
    <property type="evidence" value="ECO:0000315"/>
    <property type="project" value="UniProtKB"/>
</dbReference>
<dbReference type="GO" id="GO:0045475">
    <property type="term" value="P:locomotor rhythm"/>
    <property type="evidence" value="ECO:0000315"/>
    <property type="project" value="FlyBase"/>
</dbReference>
<dbReference type="GO" id="GO:0000278">
    <property type="term" value="P:mitotic cell cycle"/>
    <property type="evidence" value="ECO:0007001"/>
    <property type="project" value="FlyBase"/>
</dbReference>
<dbReference type="GO" id="GO:0000398">
    <property type="term" value="P:mRNA splicing, via spliceosome"/>
    <property type="evidence" value="ECO:0000305"/>
    <property type="project" value="FlyBase"/>
</dbReference>
<dbReference type="GO" id="GO:0045804">
    <property type="term" value="P:negative regulation of eclosion"/>
    <property type="evidence" value="ECO:0000315"/>
    <property type="project" value="UniProtKB"/>
</dbReference>
<dbReference type="GO" id="GO:0007300">
    <property type="term" value="P:ovarian nurse cell to oocyte transport"/>
    <property type="evidence" value="ECO:0000315"/>
    <property type="project" value="UniProtKB"/>
</dbReference>
<dbReference type="GO" id="GO:2000767">
    <property type="term" value="P:positive regulation of cytoplasmic translation"/>
    <property type="evidence" value="ECO:0000315"/>
    <property type="project" value="FlyBase"/>
</dbReference>
<dbReference type="GO" id="GO:0008104">
    <property type="term" value="P:protein localization"/>
    <property type="evidence" value="ECO:0000315"/>
    <property type="project" value="UniProtKB"/>
</dbReference>
<dbReference type="GO" id="GO:0042752">
    <property type="term" value="P:regulation of circadian rhythm"/>
    <property type="evidence" value="ECO:0000315"/>
    <property type="project" value="FlyBase"/>
</dbReference>
<dbReference type="GO" id="GO:0045995">
    <property type="term" value="P:regulation of embryonic development"/>
    <property type="evidence" value="ECO:0000315"/>
    <property type="project" value="FlyBase"/>
</dbReference>
<dbReference type="CDD" id="cd12343">
    <property type="entry name" value="RRM1_2_CoAA_like"/>
    <property type="match status" value="2"/>
</dbReference>
<dbReference type="FunFam" id="3.30.70.330:FF:000046">
    <property type="entry name" value="RNA-binding protein 14 isoform X1"/>
    <property type="match status" value="1"/>
</dbReference>
<dbReference type="FunFam" id="3.30.70.330:FF:000545">
    <property type="entry name" value="RNA-binding protein lark"/>
    <property type="match status" value="1"/>
</dbReference>
<dbReference type="Gene3D" id="3.30.70.330">
    <property type="match status" value="2"/>
</dbReference>
<dbReference type="Gene3D" id="4.10.60.10">
    <property type="entry name" value="Zinc finger, CCHC-type"/>
    <property type="match status" value="1"/>
</dbReference>
<dbReference type="InterPro" id="IPR050502">
    <property type="entry name" value="Euk_RNA-bind_prot"/>
</dbReference>
<dbReference type="InterPro" id="IPR012677">
    <property type="entry name" value="Nucleotide-bd_a/b_plait_sf"/>
</dbReference>
<dbReference type="InterPro" id="IPR035979">
    <property type="entry name" value="RBD_domain_sf"/>
</dbReference>
<dbReference type="InterPro" id="IPR000504">
    <property type="entry name" value="RRM_dom"/>
</dbReference>
<dbReference type="InterPro" id="IPR001878">
    <property type="entry name" value="Znf_CCHC"/>
</dbReference>
<dbReference type="PANTHER" id="PTHR48025">
    <property type="entry name" value="OS02G0815200 PROTEIN"/>
    <property type="match status" value="1"/>
</dbReference>
<dbReference type="PANTHER" id="PTHR48025:SF1">
    <property type="entry name" value="RRM DOMAIN-CONTAINING PROTEIN"/>
    <property type="match status" value="1"/>
</dbReference>
<dbReference type="Pfam" id="PF00076">
    <property type="entry name" value="RRM_1"/>
    <property type="match status" value="2"/>
</dbReference>
<dbReference type="Pfam" id="PF00098">
    <property type="entry name" value="zf-CCHC"/>
    <property type="match status" value="1"/>
</dbReference>
<dbReference type="SMART" id="SM00360">
    <property type="entry name" value="RRM"/>
    <property type="match status" value="2"/>
</dbReference>
<dbReference type="SMART" id="SM00343">
    <property type="entry name" value="ZnF_C2HC"/>
    <property type="match status" value="1"/>
</dbReference>
<dbReference type="SUPFAM" id="SSF54928">
    <property type="entry name" value="RNA-binding domain, RBD"/>
    <property type="match status" value="2"/>
</dbReference>
<dbReference type="PROSITE" id="PS50102">
    <property type="entry name" value="RRM"/>
    <property type="match status" value="2"/>
</dbReference>
<dbReference type="PROSITE" id="PS50158">
    <property type="entry name" value="ZF_CCHC"/>
    <property type="match status" value="1"/>
</dbReference>
<reference key="1">
    <citation type="journal article" date="1996" name="J. Neurobiol.">
        <title>Regulation of a specific circadian clock output pathway by lark, a putative RNA-binding protein with repressor activity.</title>
        <authorList>
            <person name="Newby L.M."/>
            <person name="Jackson F.R."/>
        </authorList>
    </citation>
    <scope>NUCLEOTIDE SEQUENCE [MRNA]</scope>
    <scope>FUNCTION</scope>
</reference>
<reference key="2">
    <citation type="journal article" date="2000" name="Science">
        <title>The genome sequence of Drosophila melanogaster.</title>
        <authorList>
            <person name="Adams M.D."/>
            <person name="Celniker S.E."/>
            <person name="Holt R.A."/>
            <person name="Evans C.A."/>
            <person name="Gocayne J.D."/>
            <person name="Amanatides P.G."/>
            <person name="Scherer S.E."/>
            <person name="Li P.W."/>
            <person name="Hoskins R.A."/>
            <person name="Galle R.F."/>
            <person name="George R.A."/>
            <person name="Lewis S.E."/>
            <person name="Richards S."/>
            <person name="Ashburner M."/>
            <person name="Henderson S.N."/>
            <person name="Sutton G.G."/>
            <person name="Wortman J.R."/>
            <person name="Yandell M.D."/>
            <person name="Zhang Q."/>
            <person name="Chen L.X."/>
            <person name="Brandon R.C."/>
            <person name="Rogers Y.-H.C."/>
            <person name="Blazej R.G."/>
            <person name="Champe M."/>
            <person name="Pfeiffer B.D."/>
            <person name="Wan K.H."/>
            <person name="Doyle C."/>
            <person name="Baxter E.G."/>
            <person name="Helt G."/>
            <person name="Nelson C.R."/>
            <person name="Miklos G.L.G."/>
            <person name="Abril J.F."/>
            <person name="Agbayani A."/>
            <person name="An H.-J."/>
            <person name="Andrews-Pfannkoch C."/>
            <person name="Baldwin D."/>
            <person name="Ballew R.M."/>
            <person name="Basu A."/>
            <person name="Baxendale J."/>
            <person name="Bayraktaroglu L."/>
            <person name="Beasley E.M."/>
            <person name="Beeson K.Y."/>
            <person name="Benos P.V."/>
            <person name="Berman B.P."/>
            <person name="Bhandari D."/>
            <person name="Bolshakov S."/>
            <person name="Borkova D."/>
            <person name="Botchan M.R."/>
            <person name="Bouck J."/>
            <person name="Brokstein P."/>
            <person name="Brottier P."/>
            <person name="Burtis K.C."/>
            <person name="Busam D.A."/>
            <person name="Butler H."/>
            <person name="Cadieu E."/>
            <person name="Center A."/>
            <person name="Chandra I."/>
            <person name="Cherry J.M."/>
            <person name="Cawley S."/>
            <person name="Dahlke C."/>
            <person name="Davenport L.B."/>
            <person name="Davies P."/>
            <person name="de Pablos B."/>
            <person name="Delcher A."/>
            <person name="Deng Z."/>
            <person name="Mays A.D."/>
            <person name="Dew I."/>
            <person name="Dietz S.M."/>
            <person name="Dodson K."/>
            <person name="Doup L.E."/>
            <person name="Downes M."/>
            <person name="Dugan-Rocha S."/>
            <person name="Dunkov B.C."/>
            <person name="Dunn P."/>
            <person name="Durbin K.J."/>
            <person name="Evangelista C.C."/>
            <person name="Ferraz C."/>
            <person name="Ferriera S."/>
            <person name="Fleischmann W."/>
            <person name="Fosler C."/>
            <person name="Gabrielian A.E."/>
            <person name="Garg N.S."/>
            <person name="Gelbart W.M."/>
            <person name="Glasser K."/>
            <person name="Glodek A."/>
            <person name="Gong F."/>
            <person name="Gorrell J.H."/>
            <person name="Gu Z."/>
            <person name="Guan P."/>
            <person name="Harris M."/>
            <person name="Harris N.L."/>
            <person name="Harvey D.A."/>
            <person name="Heiman T.J."/>
            <person name="Hernandez J.R."/>
            <person name="Houck J."/>
            <person name="Hostin D."/>
            <person name="Houston K.A."/>
            <person name="Howland T.J."/>
            <person name="Wei M.-H."/>
            <person name="Ibegwam C."/>
            <person name="Jalali M."/>
            <person name="Kalush F."/>
            <person name="Karpen G.H."/>
            <person name="Ke Z."/>
            <person name="Kennison J.A."/>
            <person name="Ketchum K.A."/>
            <person name="Kimmel B.E."/>
            <person name="Kodira C.D."/>
            <person name="Kraft C.L."/>
            <person name="Kravitz S."/>
            <person name="Kulp D."/>
            <person name="Lai Z."/>
            <person name="Lasko P."/>
            <person name="Lei Y."/>
            <person name="Levitsky A.A."/>
            <person name="Li J.H."/>
            <person name="Li Z."/>
            <person name="Liang Y."/>
            <person name="Lin X."/>
            <person name="Liu X."/>
            <person name="Mattei B."/>
            <person name="McIntosh T.C."/>
            <person name="McLeod M.P."/>
            <person name="McPherson D."/>
            <person name="Merkulov G."/>
            <person name="Milshina N.V."/>
            <person name="Mobarry C."/>
            <person name="Morris J."/>
            <person name="Moshrefi A."/>
            <person name="Mount S.M."/>
            <person name="Moy M."/>
            <person name="Murphy B."/>
            <person name="Murphy L."/>
            <person name="Muzny D.M."/>
            <person name="Nelson D.L."/>
            <person name="Nelson D.R."/>
            <person name="Nelson K.A."/>
            <person name="Nixon K."/>
            <person name="Nusskern D.R."/>
            <person name="Pacleb J.M."/>
            <person name="Palazzolo M."/>
            <person name="Pittman G.S."/>
            <person name="Pan S."/>
            <person name="Pollard J."/>
            <person name="Puri V."/>
            <person name="Reese M.G."/>
            <person name="Reinert K."/>
            <person name="Remington K."/>
            <person name="Saunders R.D.C."/>
            <person name="Scheeler F."/>
            <person name="Shen H."/>
            <person name="Shue B.C."/>
            <person name="Siden-Kiamos I."/>
            <person name="Simpson M."/>
            <person name="Skupski M.P."/>
            <person name="Smith T.J."/>
            <person name="Spier E."/>
            <person name="Spradling A.C."/>
            <person name="Stapleton M."/>
            <person name="Strong R."/>
            <person name="Sun E."/>
            <person name="Svirskas R."/>
            <person name="Tector C."/>
            <person name="Turner R."/>
            <person name="Venter E."/>
            <person name="Wang A.H."/>
            <person name="Wang X."/>
            <person name="Wang Z.-Y."/>
            <person name="Wassarman D.A."/>
            <person name="Weinstock G.M."/>
            <person name="Weissenbach J."/>
            <person name="Williams S.M."/>
            <person name="Woodage T."/>
            <person name="Worley K.C."/>
            <person name="Wu D."/>
            <person name="Yang S."/>
            <person name="Yao Q.A."/>
            <person name="Ye J."/>
            <person name="Yeh R.-F."/>
            <person name="Zaveri J.S."/>
            <person name="Zhan M."/>
            <person name="Zhang G."/>
            <person name="Zhao Q."/>
            <person name="Zheng L."/>
            <person name="Zheng X.H."/>
            <person name="Zhong F.N."/>
            <person name="Zhong W."/>
            <person name="Zhou X."/>
            <person name="Zhu S.C."/>
            <person name="Zhu X."/>
            <person name="Smith H.O."/>
            <person name="Gibbs R.A."/>
            <person name="Myers E.W."/>
            <person name="Rubin G.M."/>
            <person name="Venter J.C."/>
        </authorList>
    </citation>
    <scope>NUCLEOTIDE SEQUENCE [LARGE SCALE GENOMIC DNA]</scope>
    <source>
        <strain>Berkeley</strain>
    </source>
</reference>
<reference key="3">
    <citation type="journal article" date="2002" name="Genome Biol.">
        <title>Annotation of the Drosophila melanogaster euchromatic genome: a systematic review.</title>
        <authorList>
            <person name="Misra S."/>
            <person name="Crosby M.A."/>
            <person name="Mungall C.J."/>
            <person name="Matthews B.B."/>
            <person name="Campbell K.S."/>
            <person name="Hradecky P."/>
            <person name="Huang Y."/>
            <person name="Kaminker J.S."/>
            <person name="Millburn G.H."/>
            <person name="Prochnik S.E."/>
            <person name="Smith C.D."/>
            <person name="Tupy J.L."/>
            <person name="Whitfield E.J."/>
            <person name="Bayraktaroglu L."/>
            <person name="Berman B.P."/>
            <person name="Bettencourt B.R."/>
            <person name="Celniker S.E."/>
            <person name="de Grey A.D.N.J."/>
            <person name="Drysdale R.A."/>
            <person name="Harris N.L."/>
            <person name="Richter J."/>
            <person name="Russo S."/>
            <person name="Schroeder A.J."/>
            <person name="Shu S.Q."/>
            <person name="Stapleton M."/>
            <person name="Yamada C."/>
            <person name="Ashburner M."/>
            <person name="Gelbart W.M."/>
            <person name="Rubin G.M."/>
            <person name="Lewis S.E."/>
        </authorList>
    </citation>
    <scope>GENOME REANNOTATION</scope>
    <source>
        <strain>Berkeley</strain>
    </source>
</reference>
<reference key="4">
    <citation type="journal article" date="2002" name="Genome Biol.">
        <title>A Drosophila full-length cDNA resource.</title>
        <authorList>
            <person name="Stapleton M."/>
            <person name="Carlson J.W."/>
            <person name="Brokstein P."/>
            <person name="Yu C."/>
            <person name="Champe M."/>
            <person name="George R.A."/>
            <person name="Guarin H."/>
            <person name="Kronmiller B."/>
            <person name="Pacleb J.M."/>
            <person name="Park S."/>
            <person name="Wan K.H."/>
            <person name="Rubin G.M."/>
            <person name="Celniker S.E."/>
        </authorList>
    </citation>
    <scope>NUCLEOTIDE SEQUENCE [LARGE SCALE MRNA]</scope>
    <source>
        <strain>Berkeley</strain>
        <tissue>Embryo</tissue>
    </source>
</reference>
<reference key="5">
    <citation type="journal article" date="1993" name="Genetics">
        <title>A new biological rhythm mutant of Drosophila melanogaster that identifies a gene with an essential embryonic function.</title>
        <authorList>
            <person name="Newby L.M."/>
            <person name="Jackson F.R."/>
        </authorList>
    </citation>
    <scope>FUNCTION</scope>
    <scope>TISSUE SPECIFICITY</scope>
</reference>
<reference key="6">
    <citation type="journal article" date="1998" name="Neuron">
        <title>A molecular rhythm mediating circadian clock output in Drosophila.</title>
        <authorList>
            <person name="McNeil G.P."/>
            <person name="Zhang X."/>
            <person name="Genova G."/>
            <person name="Jackson F.R."/>
        </authorList>
    </citation>
    <scope>FUNCTION</scope>
    <scope>SUBCELLULAR LOCATION</scope>
    <scope>TISSUE SPECIFICITY</scope>
    <scope>INDUCTION</scope>
</reference>
<reference key="7">
    <citation type="journal article" date="2001" name="Genetics">
        <title>Genetic analysis of functional domains within the Drosophila LARK RNA-binding protein.</title>
        <authorList>
            <person name="McNeil G.P."/>
            <person name="Schroeder A.J."/>
            <person name="Roberts M.A."/>
            <person name="Jackson F.R."/>
        </authorList>
    </citation>
    <scope>FUNCTION</scope>
    <scope>MUTAGENESIS OF PHE-10; PHE-89; CYS-170 AND CYS-173</scope>
</reference>
<reference key="8">
    <citation type="journal article" date="2004" name="Genesis">
        <title>The Drosophila RNA-binding protein Lark is required for the organization of the actin cytoskeleton and Hu-li tai shao localization during oogenesis.</title>
        <authorList>
            <person name="McNeil G.P."/>
            <person name="Smith F."/>
            <person name="Galioto R."/>
        </authorList>
    </citation>
    <scope>FUNCTION</scope>
</reference>
<reference key="9">
    <citation type="journal article" date="2008" name="J. Proteome Res.">
        <title>Phosphoproteome analysis of Drosophila melanogaster embryos.</title>
        <authorList>
            <person name="Zhai B."/>
            <person name="Villen J."/>
            <person name="Beausoleil S.A."/>
            <person name="Mintseris J."/>
            <person name="Gygi S.P."/>
        </authorList>
    </citation>
    <scope>PHOSPHORYLATION [LARGE SCALE ANALYSIS] AT SER-198; SER-201; SER-315 AND SER-325</scope>
    <scope>IDENTIFICATION BY MASS SPECTROMETRY</scope>
    <source>
        <tissue>Embryo</tissue>
    </source>
</reference>